<comment type="function">
    <text evidence="1">Prevents the cell division inhibition by proteins MinC and MinD at internal division sites while permitting inhibition at polar sites. This ensures cell division at the proper site by restricting the formation of a division septum at the midpoint of the long axis of the cell.</text>
</comment>
<comment type="similarity">
    <text evidence="1">Belongs to the MinE family.</text>
</comment>
<protein>
    <recommendedName>
        <fullName evidence="1">Cell division topological specificity factor</fullName>
    </recommendedName>
</protein>
<dbReference type="EMBL" id="CP000076">
    <property type="protein sequence ID" value="AAY93636.1"/>
    <property type="molecule type" value="Genomic_DNA"/>
</dbReference>
<dbReference type="RefSeq" id="WP_007898843.1">
    <property type="nucleotide sequence ID" value="NC_004129.6"/>
</dbReference>
<dbReference type="SMR" id="Q4K8G0"/>
<dbReference type="STRING" id="220664.PFL_4381"/>
<dbReference type="GeneID" id="57661348"/>
<dbReference type="KEGG" id="pfl:PFL_4381"/>
<dbReference type="eggNOG" id="COG0851">
    <property type="taxonomic scope" value="Bacteria"/>
</dbReference>
<dbReference type="HOGENOM" id="CLU_137929_2_2_6"/>
<dbReference type="Proteomes" id="UP000008540">
    <property type="component" value="Chromosome"/>
</dbReference>
<dbReference type="GO" id="GO:0051301">
    <property type="term" value="P:cell division"/>
    <property type="evidence" value="ECO:0007669"/>
    <property type="project" value="UniProtKB-KW"/>
</dbReference>
<dbReference type="GO" id="GO:0032955">
    <property type="term" value="P:regulation of division septum assembly"/>
    <property type="evidence" value="ECO:0007669"/>
    <property type="project" value="InterPro"/>
</dbReference>
<dbReference type="FunFam" id="3.30.1070.10:FF:000001">
    <property type="entry name" value="Cell division topological specificity factor"/>
    <property type="match status" value="1"/>
</dbReference>
<dbReference type="Gene3D" id="3.30.1070.10">
    <property type="entry name" value="Cell division topological specificity factor MinE"/>
    <property type="match status" value="1"/>
</dbReference>
<dbReference type="HAMAP" id="MF_00262">
    <property type="entry name" value="MinE"/>
    <property type="match status" value="1"/>
</dbReference>
<dbReference type="InterPro" id="IPR005527">
    <property type="entry name" value="MinE"/>
</dbReference>
<dbReference type="InterPro" id="IPR036707">
    <property type="entry name" value="MinE_sf"/>
</dbReference>
<dbReference type="NCBIfam" id="TIGR01215">
    <property type="entry name" value="minE"/>
    <property type="match status" value="1"/>
</dbReference>
<dbReference type="NCBIfam" id="NF001422">
    <property type="entry name" value="PRK00296.1"/>
    <property type="match status" value="1"/>
</dbReference>
<dbReference type="NCBIfam" id="NF010595">
    <property type="entry name" value="PRK13989.1"/>
    <property type="match status" value="1"/>
</dbReference>
<dbReference type="Pfam" id="PF03776">
    <property type="entry name" value="MinE"/>
    <property type="match status" value="1"/>
</dbReference>
<dbReference type="SUPFAM" id="SSF55229">
    <property type="entry name" value="Cell division protein MinE topological specificity domain"/>
    <property type="match status" value="1"/>
</dbReference>
<sequence>MNLFDFFRASKKVSTASVAKERLQIIVAHERGQRSTPDYLPALQKELVEVIRKYVNIGSDDVHVALENQGSCSILELNITLPDR</sequence>
<feature type="chain" id="PRO_0000298161" description="Cell division topological specificity factor">
    <location>
        <begin position="1"/>
        <end position="84"/>
    </location>
</feature>
<gene>
    <name evidence="1" type="primary">minE</name>
    <name type="ordered locus">PFL_4381</name>
</gene>
<name>MINE_PSEF5</name>
<reference key="1">
    <citation type="journal article" date="2005" name="Nat. Biotechnol.">
        <title>Complete genome sequence of the plant commensal Pseudomonas fluorescens Pf-5.</title>
        <authorList>
            <person name="Paulsen I.T."/>
            <person name="Press C.M."/>
            <person name="Ravel J."/>
            <person name="Kobayashi D.Y."/>
            <person name="Myers G.S.A."/>
            <person name="Mavrodi D.V."/>
            <person name="DeBoy R.T."/>
            <person name="Seshadri R."/>
            <person name="Ren Q."/>
            <person name="Madupu R."/>
            <person name="Dodson R.J."/>
            <person name="Durkin A.S."/>
            <person name="Brinkac L.M."/>
            <person name="Daugherty S.C."/>
            <person name="Sullivan S.A."/>
            <person name="Rosovitz M.J."/>
            <person name="Gwinn M.L."/>
            <person name="Zhou L."/>
            <person name="Schneider D.J."/>
            <person name="Cartinhour S.W."/>
            <person name="Nelson W.C."/>
            <person name="Weidman J."/>
            <person name="Watkins K."/>
            <person name="Tran K."/>
            <person name="Khouri H."/>
            <person name="Pierson E.A."/>
            <person name="Pierson L.S. III"/>
            <person name="Thomashow L.S."/>
            <person name="Loper J.E."/>
        </authorList>
    </citation>
    <scope>NUCLEOTIDE SEQUENCE [LARGE SCALE GENOMIC DNA]</scope>
    <source>
        <strain>ATCC BAA-477 / NRRL B-23932 / Pf-5</strain>
    </source>
</reference>
<proteinExistence type="inferred from homology"/>
<evidence type="ECO:0000255" key="1">
    <source>
        <dbReference type="HAMAP-Rule" id="MF_00262"/>
    </source>
</evidence>
<organism>
    <name type="scientific">Pseudomonas fluorescens (strain ATCC BAA-477 / NRRL B-23932 / Pf-5)</name>
    <dbReference type="NCBI Taxonomy" id="220664"/>
    <lineage>
        <taxon>Bacteria</taxon>
        <taxon>Pseudomonadati</taxon>
        <taxon>Pseudomonadota</taxon>
        <taxon>Gammaproteobacteria</taxon>
        <taxon>Pseudomonadales</taxon>
        <taxon>Pseudomonadaceae</taxon>
        <taxon>Pseudomonas</taxon>
    </lineage>
</organism>
<keyword id="KW-0131">Cell cycle</keyword>
<keyword id="KW-0132">Cell division</keyword>
<accession>Q4K8G0</accession>